<reference key="1">
    <citation type="journal article" date="2001" name="Science">
        <title>Genome sequence of the plant pathogen and biotechnology agent Agrobacterium tumefaciens C58.</title>
        <authorList>
            <person name="Goodner B."/>
            <person name="Hinkle G."/>
            <person name="Gattung S."/>
            <person name="Miller N."/>
            <person name="Blanchard M."/>
            <person name="Qurollo B."/>
            <person name="Goldman B.S."/>
            <person name="Cao Y."/>
            <person name="Askenazi M."/>
            <person name="Halling C."/>
            <person name="Mullin L."/>
            <person name="Houmiel K."/>
            <person name="Gordon J."/>
            <person name="Vaudin M."/>
            <person name="Iartchouk O."/>
            <person name="Epp A."/>
            <person name="Liu F."/>
            <person name="Wollam C."/>
            <person name="Allinger M."/>
            <person name="Doughty D."/>
            <person name="Scott C."/>
            <person name="Lappas C."/>
            <person name="Markelz B."/>
            <person name="Flanagan C."/>
            <person name="Crowell C."/>
            <person name="Gurson J."/>
            <person name="Lomo C."/>
            <person name="Sear C."/>
            <person name="Strub G."/>
            <person name="Cielo C."/>
            <person name="Slater S."/>
        </authorList>
    </citation>
    <scope>NUCLEOTIDE SEQUENCE [LARGE SCALE GENOMIC DNA]</scope>
    <source>
        <strain>C58 / ATCC 33970</strain>
    </source>
</reference>
<reference key="2">
    <citation type="journal article" date="2001" name="Science">
        <title>The genome of the natural genetic engineer Agrobacterium tumefaciens C58.</title>
        <authorList>
            <person name="Wood D.W."/>
            <person name="Setubal J.C."/>
            <person name="Kaul R."/>
            <person name="Monks D.E."/>
            <person name="Kitajima J.P."/>
            <person name="Okura V.K."/>
            <person name="Zhou Y."/>
            <person name="Chen L."/>
            <person name="Wood G.E."/>
            <person name="Almeida N.F. Jr."/>
            <person name="Woo L."/>
            <person name="Chen Y."/>
            <person name="Paulsen I.T."/>
            <person name="Eisen J.A."/>
            <person name="Karp P.D."/>
            <person name="Bovee D. Sr."/>
            <person name="Chapman P."/>
            <person name="Clendenning J."/>
            <person name="Deatherage G."/>
            <person name="Gillet W."/>
            <person name="Grant C."/>
            <person name="Kutyavin T."/>
            <person name="Levy R."/>
            <person name="Li M.-J."/>
            <person name="McClelland E."/>
            <person name="Palmieri A."/>
            <person name="Raymond C."/>
            <person name="Rouse G."/>
            <person name="Saenphimmachak C."/>
            <person name="Wu Z."/>
            <person name="Romero P."/>
            <person name="Gordon D."/>
            <person name="Zhang S."/>
            <person name="Yoo H."/>
            <person name="Tao Y."/>
            <person name="Biddle P."/>
            <person name="Jung M."/>
            <person name="Krespan W."/>
            <person name="Perry M."/>
            <person name="Gordon-Kamm B."/>
            <person name="Liao L."/>
            <person name="Kim S."/>
            <person name="Hendrick C."/>
            <person name="Zhao Z.-Y."/>
            <person name="Dolan M."/>
            <person name="Chumley F."/>
            <person name="Tingey S.V."/>
            <person name="Tomb J.-F."/>
            <person name="Gordon M.P."/>
            <person name="Olson M.V."/>
            <person name="Nester E.W."/>
        </authorList>
    </citation>
    <scope>NUCLEOTIDE SEQUENCE [LARGE SCALE GENOMIC DNA]</scope>
    <source>
        <strain>C58 / ATCC 33970</strain>
    </source>
</reference>
<comment type="similarity">
    <text evidence="1">Belongs to the UPF0173 family.</text>
</comment>
<comment type="sequence caution" evidence="2">
    <conflict type="erroneous initiation">
        <sequence resource="EMBL-CDS" id="AAK87108"/>
    </conflict>
</comment>
<gene>
    <name type="ordered locus">Atu1317</name>
    <name type="ORF">AGR_C_2426</name>
</gene>
<proteinExistence type="inferred from homology"/>
<accession>A9CJ88</accession>
<protein>
    <recommendedName>
        <fullName evidence="1">UPF0173 metal-dependent hydrolase Atu1317</fullName>
    </recommendedName>
</protein>
<evidence type="ECO:0000255" key="1">
    <source>
        <dbReference type="HAMAP-Rule" id="MF_00457"/>
    </source>
</evidence>
<evidence type="ECO:0000305" key="2"/>
<keyword id="KW-0378">Hydrolase</keyword>
<keyword id="KW-1185">Reference proteome</keyword>
<organism>
    <name type="scientific">Agrobacterium fabrum (strain C58 / ATCC 33970)</name>
    <name type="common">Agrobacterium tumefaciens (strain C58)</name>
    <dbReference type="NCBI Taxonomy" id="176299"/>
    <lineage>
        <taxon>Bacteria</taxon>
        <taxon>Pseudomonadati</taxon>
        <taxon>Pseudomonadota</taxon>
        <taxon>Alphaproteobacteria</taxon>
        <taxon>Hyphomicrobiales</taxon>
        <taxon>Rhizobiaceae</taxon>
        <taxon>Rhizobium/Agrobacterium group</taxon>
        <taxon>Agrobacterium</taxon>
        <taxon>Agrobacterium tumefaciens complex</taxon>
    </lineage>
</organism>
<name>Y1317_AGRFC</name>
<dbReference type="EMBL" id="AE007869">
    <property type="protein sequence ID" value="AAK87108.2"/>
    <property type="status" value="ALT_INIT"/>
    <property type="molecule type" value="Genomic_DNA"/>
</dbReference>
<dbReference type="RefSeq" id="NP_354323.2">
    <property type="nucleotide sequence ID" value="NC_003062.2"/>
</dbReference>
<dbReference type="RefSeq" id="WP_035256572.1">
    <property type="nucleotide sequence ID" value="NC_003062.2"/>
</dbReference>
<dbReference type="SMR" id="A9CJ88"/>
<dbReference type="STRING" id="176299.Atu1317"/>
<dbReference type="EnsemblBacteria" id="AAK87108">
    <property type="protein sequence ID" value="AAK87108"/>
    <property type="gene ID" value="Atu1317"/>
</dbReference>
<dbReference type="GeneID" id="44143576"/>
<dbReference type="KEGG" id="atu:Atu1317"/>
<dbReference type="PATRIC" id="fig|176299.10.peg.1334"/>
<dbReference type="eggNOG" id="COG2220">
    <property type="taxonomic scope" value="Bacteria"/>
</dbReference>
<dbReference type="HOGENOM" id="CLU_800851_0_0_5"/>
<dbReference type="OrthoDB" id="9789133at2"/>
<dbReference type="Proteomes" id="UP000000813">
    <property type="component" value="Chromosome circular"/>
</dbReference>
<dbReference type="GO" id="GO:0016787">
    <property type="term" value="F:hydrolase activity"/>
    <property type="evidence" value="ECO:0007669"/>
    <property type="project" value="UniProtKB-UniRule"/>
</dbReference>
<dbReference type="Gene3D" id="3.60.15.10">
    <property type="entry name" value="Ribonuclease Z/Hydroxyacylglutathione hydrolase-like"/>
    <property type="match status" value="1"/>
</dbReference>
<dbReference type="HAMAP" id="MF_00457">
    <property type="entry name" value="UPF0173"/>
    <property type="match status" value="1"/>
</dbReference>
<dbReference type="InterPro" id="IPR001279">
    <property type="entry name" value="Metallo-B-lactamas"/>
</dbReference>
<dbReference type="InterPro" id="IPR036866">
    <property type="entry name" value="RibonucZ/Hydroxyglut_hydro"/>
</dbReference>
<dbReference type="InterPro" id="IPR022877">
    <property type="entry name" value="UPF0173"/>
</dbReference>
<dbReference type="InterPro" id="IPR050114">
    <property type="entry name" value="UPF0173_UPF0282_UlaG_hydrolase"/>
</dbReference>
<dbReference type="NCBIfam" id="NF001911">
    <property type="entry name" value="PRK00685.1"/>
    <property type="match status" value="1"/>
</dbReference>
<dbReference type="PANTHER" id="PTHR43546:SF3">
    <property type="entry name" value="UPF0173 METAL-DEPENDENT HYDROLASE MJ1163"/>
    <property type="match status" value="1"/>
</dbReference>
<dbReference type="PANTHER" id="PTHR43546">
    <property type="entry name" value="UPF0173 METAL-DEPENDENT HYDROLASE MJ1163-RELATED"/>
    <property type="match status" value="1"/>
</dbReference>
<dbReference type="Pfam" id="PF12706">
    <property type="entry name" value="Lactamase_B_2"/>
    <property type="match status" value="1"/>
</dbReference>
<dbReference type="SMART" id="SM00849">
    <property type="entry name" value="Lactamase_B"/>
    <property type="match status" value="1"/>
</dbReference>
<dbReference type="SUPFAM" id="SSF56281">
    <property type="entry name" value="Metallo-hydrolase/oxidoreductase"/>
    <property type="match status" value="1"/>
</dbReference>
<feature type="chain" id="PRO_0000367157" description="UPF0173 metal-dependent hydrolase Atu1317">
    <location>
        <begin position="1"/>
        <end position="234"/>
    </location>
</feature>
<sequence>MKLTWLGHSAFRLENGSAKILIDPFFTGNPGFAGQDGKSAAEGITHILLTHGHGDHVGDTVQLARETGATVLANADLAAWLSAKGVAKVDMGNTGGTVHFDGFSVTFTNALHSSAQITEDGVSHSLGNANGLMLHFEDGPAVYHMGDTDIFSDMKLINELHQPDIGLVPIGDRFTMGGAVAALACQRFFKFQNVIPCHYGSFPIIDQTPDKFVAGMEGAEARVHTPKAGDTLSF</sequence>